<gene>
    <name evidence="1" type="primary">miaB</name>
    <name type="ordered locus">NSE_0832</name>
</gene>
<name>MIAB_NEOSM</name>
<protein>
    <recommendedName>
        <fullName evidence="1">tRNA-2-methylthio-N(6)-dimethylallyladenosine synthase</fullName>
        <ecNumber evidence="1">2.8.4.3</ecNumber>
    </recommendedName>
    <alternativeName>
        <fullName evidence="1">(Dimethylallyl)adenosine tRNA methylthiotransferase MiaB</fullName>
    </alternativeName>
    <alternativeName>
        <fullName evidence="1">tRNA-i(6)A37 methylthiotransferase</fullName>
    </alternativeName>
</protein>
<reference key="1">
    <citation type="journal article" date="2006" name="PLoS Genet.">
        <title>Comparative genomics of emerging human ehrlichiosis agents.</title>
        <authorList>
            <person name="Dunning Hotopp J.C."/>
            <person name="Lin M."/>
            <person name="Madupu R."/>
            <person name="Crabtree J."/>
            <person name="Angiuoli S.V."/>
            <person name="Eisen J.A."/>
            <person name="Seshadri R."/>
            <person name="Ren Q."/>
            <person name="Wu M."/>
            <person name="Utterback T.R."/>
            <person name="Smith S."/>
            <person name="Lewis M."/>
            <person name="Khouri H."/>
            <person name="Zhang C."/>
            <person name="Niu H."/>
            <person name="Lin Q."/>
            <person name="Ohashi N."/>
            <person name="Zhi N."/>
            <person name="Nelson W.C."/>
            <person name="Brinkac L.M."/>
            <person name="Dodson R.J."/>
            <person name="Rosovitz M.J."/>
            <person name="Sundaram J.P."/>
            <person name="Daugherty S.C."/>
            <person name="Davidsen T."/>
            <person name="Durkin A.S."/>
            <person name="Gwinn M.L."/>
            <person name="Haft D.H."/>
            <person name="Selengut J.D."/>
            <person name="Sullivan S.A."/>
            <person name="Zafar N."/>
            <person name="Zhou L."/>
            <person name="Benahmed F."/>
            <person name="Forberger H."/>
            <person name="Halpin R."/>
            <person name="Mulligan S."/>
            <person name="Robinson J."/>
            <person name="White O."/>
            <person name="Rikihisa Y."/>
            <person name="Tettelin H."/>
        </authorList>
    </citation>
    <scope>NUCLEOTIDE SEQUENCE [LARGE SCALE GENOMIC DNA]</scope>
    <source>
        <strain>ATCC VR-367 / Miyayama</strain>
    </source>
</reference>
<evidence type="ECO:0000255" key="1">
    <source>
        <dbReference type="HAMAP-Rule" id="MF_01864"/>
    </source>
</evidence>
<evidence type="ECO:0000255" key="2">
    <source>
        <dbReference type="PROSITE-ProRule" id="PRU01266"/>
    </source>
</evidence>
<sequence length="471" mass="53531">MLLYLADVVIFSHAKVYMEKIEKKNNSLKKFHIKTYGCQMNVYDSEMIEKIVSGLGFTLSERAEDADLIILNTCNIREKAAEKLYSELGQIRLLQKKKQERILIVVAGCVAQAEGEEIMRRAENVDVVVGPQSIHSLPELIAKVNRQSGKAIKMEFDPIEKFDYLAEETRKRRVPQSSAFLSIQEGCDKFCAFCVVPYTRGAEYSRSTEEVYREALSLTTKGVKEITLLGQNVNGYHGTLDSGNKVLNLGQLISRLGKIPSLKRIRYTTSHPVDMHKELYDAHANESKLMPFVHLPVQSGSDKILKQMNRKYTTADYLKIINEFQNARSDIAFSSDFIVGFPGESDDDFQQTLALIEQVNYAQCYSFKYSPRPGTPGATYPQISEETKNTRLQKLQQLLKEKQLEFNKKMIGKTVTVLFDKKHPDKISGRTEYMQQVFSDDSNLLDKIVTMRVEDASTFTLKCTAEDIIST</sequence>
<organism>
    <name type="scientific">Neorickettsia sennetsu (strain ATCC VR-367 / Miyayama)</name>
    <name type="common">Ehrlichia sennetsu</name>
    <dbReference type="NCBI Taxonomy" id="222891"/>
    <lineage>
        <taxon>Bacteria</taxon>
        <taxon>Pseudomonadati</taxon>
        <taxon>Pseudomonadota</taxon>
        <taxon>Alphaproteobacteria</taxon>
        <taxon>Rickettsiales</taxon>
        <taxon>Anaplasmataceae</taxon>
        <taxon>Neorickettsia</taxon>
    </lineage>
</organism>
<comment type="function">
    <text evidence="1">Catalyzes the methylthiolation of N6-(dimethylallyl)adenosine (i(6)A), leading to the formation of 2-methylthio-N6-(dimethylallyl)adenosine (ms(2)i(6)A) at position 37 in tRNAs that read codons beginning with uridine.</text>
</comment>
<comment type="catalytic activity">
    <reaction evidence="1">
        <text>N(6)-dimethylallyladenosine(37) in tRNA + (sulfur carrier)-SH + AH2 + 2 S-adenosyl-L-methionine = 2-methylsulfanyl-N(6)-dimethylallyladenosine(37) in tRNA + (sulfur carrier)-H + 5'-deoxyadenosine + L-methionine + A + S-adenosyl-L-homocysteine + 2 H(+)</text>
        <dbReference type="Rhea" id="RHEA:37067"/>
        <dbReference type="Rhea" id="RHEA-COMP:10375"/>
        <dbReference type="Rhea" id="RHEA-COMP:10376"/>
        <dbReference type="Rhea" id="RHEA-COMP:14737"/>
        <dbReference type="Rhea" id="RHEA-COMP:14739"/>
        <dbReference type="ChEBI" id="CHEBI:13193"/>
        <dbReference type="ChEBI" id="CHEBI:15378"/>
        <dbReference type="ChEBI" id="CHEBI:17319"/>
        <dbReference type="ChEBI" id="CHEBI:17499"/>
        <dbReference type="ChEBI" id="CHEBI:29917"/>
        <dbReference type="ChEBI" id="CHEBI:57844"/>
        <dbReference type="ChEBI" id="CHEBI:57856"/>
        <dbReference type="ChEBI" id="CHEBI:59789"/>
        <dbReference type="ChEBI" id="CHEBI:64428"/>
        <dbReference type="ChEBI" id="CHEBI:74415"/>
        <dbReference type="ChEBI" id="CHEBI:74417"/>
        <dbReference type="EC" id="2.8.4.3"/>
    </reaction>
</comment>
<comment type="cofactor">
    <cofactor evidence="1">
        <name>[4Fe-4S] cluster</name>
        <dbReference type="ChEBI" id="CHEBI:49883"/>
    </cofactor>
    <text evidence="1">Binds 2 [4Fe-4S] clusters. One cluster is coordinated with 3 cysteines and an exchangeable S-adenosyl-L-methionine.</text>
</comment>
<comment type="subunit">
    <text evidence="1">Monomer.</text>
</comment>
<comment type="subcellular location">
    <subcellularLocation>
        <location evidence="1">Cytoplasm</location>
    </subcellularLocation>
</comment>
<comment type="similarity">
    <text evidence="1">Belongs to the methylthiotransferase family. MiaB subfamily.</text>
</comment>
<feature type="chain" id="PRO_0000374406" description="tRNA-2-methylthio-N(6)-dimethylallyladenosine synthase">
    <location>
        <begin position="1"/>
        <end position="471"/>
    </location>
</feature>
<feature type="domain" description="MTTase N-terminal" evidence="1">
    <location>
        <begin position="29"/>
        <end position="146"/>
    </location>
</feature>
<feature type="domain" description="Radical SAM core" evidence="2">
    <location>
        <begin position="173"/>
        <end position="405"/>
    </location>
</feature>
<feature type="domain" description="TRAM" evidence="1">
    <location>
        <begin position="408"/>
        <end position="467"/>
    </location>
</feature>
<feature type="binding site" evidence="1">
    <location>
        <position position="38"/>
    </location>
    <ligand>
        <name>[4Fe-4S] cluster</name>
        <dbReference type="ChEBI" id="CHEBI:49883"/>
        <label>1</label>
    </ligand>
</feature>
<feature type="binding site" evidence="1">
    <location>
        <position position="74"/>
    </location>
    <ligand>
        <name>[4Fe-4S] cluster</name>
        <dbReference type="ChEBI" id="CHEBI:49883"/>
        <label>1</label>
    </ligand>
</feature>
<feature type="binding site" evidence="1">
    <location>
        <position position="109"/>
    </location>
    <ligand>
        <name>[4Fe-4S] cluster</name>
        <dbReference type="ChEBI" id="CHEBI:49883"/>
        <label>1</label>
    </ligand>
</feature>
<feature type="binding site" evidence="1">
    <location>
        <position position="187"/>
    </location>
    <ligand>
        <name>[4Fe-4S] cluster</name>
        <dbReference type="ChEBI" id="CHEBI:49883"/>
        <label>2</label>
        <note>4Fe-4S-S-AdoMet</note>
    </ligand>
</feature>
<feature type="binding site" evidence="1">
    <location>
        <position position="191"/>
    </location>
    <ligand>
        <name>[4Fe-4S] cluster</name>
        <dbReference type="ChEBI" id="CHEBI:49883"/>
        <label>2</label>
        <note>4Fe-4S-S-AdoMet</note>
    </ligand>
</feature>
<feature type="binding site" evidence="1">
    <location>
        <position position="194"/>
    </location>
    <ligand>
        <name>[4Fe-4S] cluster</name>
        <dbReference type="ChEBI" id="CHEBI:49883"/>
        <label>2</label>
        <note>4Fe-4S-S-AdoMet</note>
    </ligand>
</feature>
<keyword id="KW-0004">4Fe-4S</keyword>
<keyword id="KW-0963">Cytoplasm</keyword>
<keyword id="KW-0408">Iron</keyword>
<keyword id="KW-0411">Iron-sulfur</keyword>
<keyword id="KW-0479">Metal-binding</keyword>
<keyword id="KW-0949">S-adenosyl-L-methionine</keyword>
<keyword id="KW-0808">Transferase</keyword>
<keyword id="KW-0819">tRNA processing</keyword>
<proteinExistence type="inferred from homology"/>
<accession>Q2GCU4</accession>
<dbReference type="EC" id="2.8.4.3" evidence="1"/>
<dbReference type="EMBL" id="CP000237">
    <property type="protein sequence ID" value="ABD46233.1"/>
    <property type="molecule type" value="Genomic_DNA"/>
</dbReference>
<dbReference type="SMR" id="Q2GCU4"/>
<dbReference type="STRING" id="222891.NSE_0832"/>
<dbReference type="KEGG" id="nse:NSE_0832"/>
<dbReference type="eggNOG" id="COG0621">
    <property type="taxonomic scope" value="Bacteria"/>
</dbReference>
<dbReference type="HOGENOM" id="CLU_018697_2_0_5"/>
<dbReference type="Proteomes" id="UP000001942">
    <property type="component" value="Chromosome"/>
</dbReference>
<dbReference type="GO" id="GO:0005829">
    <property type="term" value="C:cytosol"/>
    <property type="evidence" value="ECO:0007669"/>
    <property type="project" value="TreeGrafter"/>
</dbReference>
<dbReference type="GO" id="GO:0051539">
    <property type="term" value="F:4 iron, 4 sulfur cluster binding"/>
    <property type="evidence" value="ECO:0007669"/>
    <property type="project" value="UniProtKB-UniRule"/>
</dbReference>
<dbReference type="GO" id="GO:0046872">
    <property type="term" value="F:metal ion binding"/>
    <property type="evidence" value="ECO:0007669"/>
    <property type="project" value="UniProtKB-KW"/>
</dbReference>
<dbReference type="GO" id="GO:0035597">
    <property type="term" value="F:N6-isopentenyladenosine methylthiotransferase activity"/>
    <property type="evidence" value="ECO:0007669"/>
    <property type="project" value="TreeGrafter"/>
</dbReference>
<dbReference type="CDD" id="cd01335">
    <property type="entry name" value="Radical_SAM"/>
    <property type="match status" value="1"/>
</dbReference>
<dbReference type="FunFam" id="3.40.50.12160:FF:000003">
    <property type="entry name" value="CDK5 regulatory subunit-associated protein 1"/>
    <property type="match status" value="1"/>
</dbReference>
<dbReference type="FunFam" id="3.80.30.20:FF:000001">
    <property type="entry name" value="tRNA-2-methylthio-N(6)-dimethylallyladenosine synthase 2"/>
    <property type="match status" value="1"/>
</dbReference>
<dbReference type="Gene3D" id="3.40.50.12160">
    <property type="entry name" value="Methylthiotransferase, N-terminal domain"/>
    <property type="match status" value="1"/>
</dbReference>
<dbReference type="Gene3D" id="3.80.30.20">
    <property type="entry name" value="tm_1862 like domain"/>
    <property type="match status" value="1"/>
</dbReference>
<dbReference type="HAMAP" id="MF_01864">
    <property type="entry name" value="tRNA_metthiotr_MiaB"/>
    <property type="match status" value="1"/>
</dbReference>
<dbReference type="InterPro" id="IPR006638">
    <property type="entry name" value="Elp3/MiaA/NifB-like_rSAM"/>
</dbReference>
<dbReference type="InterPro" id="IPR005839">
    <property type="entry name" value="Methylthiotransferase"/>
</dbReference>
<dbReference type="InterPro" id="IPR020612">
    <property type="entry name" value="Methylthiotransferase_CS"/>
</dbReference>
<dbReference type="InterPro" id="IPR013848">
    <property type="entry name" value="Methylthiotransferase_N"/>
</dbReference>
<dbReference type="InterPro" id="IPR038135">
    <property type="entry name" value="Methylthiotransferase_N_sf"/>
</dbReference>
<dbReference type="InterPro" id="IPR006463">
    <property type="entry name" value="MiaB_methiolase"/>
</dbReference>
<dbReference type="InterPro" id="IPR007197">
    <property type="entry name" value="rSAM"/>
</dbReference>
<dbReference type="InterPro" id="IPR023404">
    <property type="entry name" value="rSAM_horseshoe"/>
</dbReference>
<dbReference type="NCBIfam" id="TIGR01574">
    <property type="entry name" value="miaB-methiolase"/>
    <property type="match status" value="1"/>
</dbReference>
<dbReference type="NCBIfam" id="TIGR00089">
    <property type="entry name" value="MiaB/RimO family radical SAM methylthiotransferase"/>
    <property type="match status" value="1"/>
</dbReference>
<dbReference type="PANTHER" id="PTHR43020">
    <property type="entry name" value="CDK5 REGULATORY SUBUNIT-ASSOCIATED PROTEIN 1"/>
    <property type="match status" value="1"/>
</dbReference>
<dbReference type="PANTHER" id="PTHR43020:SF2">
    <property type="entry name" value="MITOCHONDRIAL TRNA METHYLTHIOTRANSFERASE CDK5RAP1"/>
    <property type="match status" value="1"/>
</dbReference>
<dbReference type="Pfam" id="PF04055">
    <property type="entry name" value="Radical_SAM"/>
    <property type="match status" value="1"/>
</dbReference>
<dbReference type="Pfam" id="PF00919">
    <property type="entry name" value="UPF0004"/>
    <property type="match status" value="1"/>
</dbReference>
<dbReference type="SFLD" id="SFLDF00273">
    <property type="entry name" value="(dimethylallyl)adenosine_tRNA"/>
    <property type="match status" value="1"/>
</dbReference>
<dbReference type="SFLD" id="SFLDG01082">
    <property type="entry name" value="B12-binding_domain_containing"/>
    <property type="match status" value="1"/>
</dbReference>
<dbReference type="SFLD" id="SFLDG01061">
    <property type="entry name" value="methylthiotransferase"/>
    <property type="match status" value="1"/>
</dbReference>
<dbReference type="SMART" id="SM00729">
    <property type="entry name" value="Elp3"/>
    <property type="match status" value="1"/>
</dbReference>
<dbReference type="SUPFAM" id="SSF102114">
    <property type="entry name" value="Radical SAM enzymes"/>
    <property type="match status" value="1"/>
</dbReference>
<dbReference type="PROSITE" id="PS51449">
    <property type="entry name" value="MTTASE_N"/>
    <property type="match status" value="1"/>
</dbReference>
<dbReference type="PROSITE" id="PS01278">
    <property type="entry name" value="MTTASE_RADICAL"/>
    <property type="match status" value="1"/>
</dbReference>
<dbReference type="PROSITE" id="PS51918">
    <property type="entry name" value="RADICAL_SAM"/>
    <property type="match status" value="1"/>
</dbReference>